<evidence type="ECO:0000250" key="1">
    <source>
        <dbReference type="UniProtKB" id="O76082"/>
    </source>
</evidence>
<evidence type="ECO:0000250" key="2">
    <source>
        <dbReference type="UniProtKB" id="Q9Z0E8"/>
    </source>
</evidence>
<evidence type="ECO:0000255" key="3"/>
<evidence type="ECO:0000256" key="4">
    <source>
        <dbReference type="SAM" id="MobiDB-lite"/>
    </source>
</evidence>
<evidence type="ECO:0000269" key="5">
    <source>
    </source>
</evidence>
<evidence type="ECO:0000269" key="6">
    <source>
    </source>
</evidence>
<evidence type="ECO:0000305" key="7"/>
<evidence type="ECO:0000305" key="8">
    <source>
    </source>
</evidence>
<evidence type="ECO:0007744" key="9">
    <source>
    </source>
</evidence>
<name>S22A5_RAT</name>
<comment type="function">
    <text evidence="5 8">Sodium-ion dependent, high affinity carnitine transporter. Involved in the active cellular uptake of carnitine. Transports one sodium ion with one molecule of carnitine. Also transports organic cations such as tetraethylammonium (TEA) without the involvement of sodium. Also relative uptake activity ratio of carnitine to TEA is 11.3. May also contribute to regulate the transport of organic compounds in testis across the blood-testis-barrier (Probable).</text>
</comment>
<comment type="catalytic activity">
    <reaction evidence="5">
        <text>(R)-carnitine(out) + Na(+)(out) = (R)-carnitine(in) + Na(+)(in)</text>
        <dbReference type="Rhea" id="RHEA:72091"/>
        <dbReference type="ChEBI" id="CHEBI:16347"/>
        <dbReference type="ChEBI" id="CHEBI:29101"/>
    </reaction>
</comment>
<comment type="catalytic activity">
    <reaction evidence="5">
        <text>O-acetyl-(R)-carnitine(out) + Na(+)(out) = O-acetyl-(R)-carnitine(in) + Na(+)(in)</text>
        <dbReference type="Rhea" id="RHEA:72099"/>
        <dbReference type="ChEBI" id="CHEBI:29101"/>
        <dbReference type="ChEBI" id="CHEBI:57589"/>
    </reaction>
</comment>
<comment type="catalytic activity">
    <reaction evidence="5">
        <text>O-propanoyl-(R)-carnitine(out) + Na(+)(out) = O-propanoyl-(R)-carnitine(in) + Na(+)(in)</text>
        <dbReference type="Rhea" id="RHEA:72103"/>
        <dbReference type="ChEBI" id="CHEBI:29101"/>
        <dbReference type="ChEBI" id="CHEBI:53210"/>
    </reaction>
</comment>
<comment type="catalytic activity">
    <reaction evidence="1">
        <text>glycine betaine(out) + Na(+)(out) = glycine betaine(in) + Na(+)(in)</text>
        <dbReference type="Rhea" id="RHEA:72115"/>
        <dbReference type="ChEBI" id="CHEBI:17750"/>
        <dbReference type="ChEBI" id="CHEBI:29101"/>
    </reaction>
</comment>
<comment type="catalytic activity">
    <reaction evidence="1">
        <text>glycine betaine(out) + (R)-carnitine(in) = glycine betaine(in) + (R)-carnitine(out)</text>
        <dbReference type="Rhea" id="RHEA:72119"/>
        <dbReference type="ChEBI" id="CHEBI:16347"/>
        <dbReference type="ChEBI" id="CHEBI:17750"/>
    </reaction>
</comment>
<comment type="catalytic activity">
    <reaction evidence="1">
        <text>O-butanoyl-(R)-carnitine(out) + Na(+)(out) = O-butanoyl-(R)-carnitine(in) + Na(+)(in)</text>
        <dbReference type="Rhea" id="RHEA:72123"/>
        <dbReference type="ChEBI" id="CHEBI:21949"/>
        <dbReference type="ChEBI" id="CHEBI:29101"/>
    </reaction>
</comment>
<comment type="catalytic activity">
    <reaction evidence="1">
        <text>(S)-carnitine(out) + Na(+)(out) = (S)-carnitine(in) + Na(+)(in)</text>
        <dbReference type="Rhea" id="RHEA:72095"/>
        <dbReference type="ChEBI" id="CHEBI:11060"/>
        <dbReference type="ChEBI" id="CHEBI:29101"/>
    </reaction>
</comment>
<comment type="catalytic activity">
    <reaction evidence="1">
        <text>an O-acyl-(R)-carnitine(out) + Na(+)(out) = an O-acyl-(R)-carnitine(in) + Na(+)(in)</text>
        <dbReference type="Rhea" id="RHEA:72107"/>
        <dbReference type="ChEBI" id="CHEBI:29101"/>
        <dbReference type="ChEBI" id="CHEBI:75659"/>
    </reaction>
</comment>
<comment type="catalytic activity">
    <reaction evidence="1">
        <text>L-glutamyl-L-arginyl-glycyl-L-methionyl-L-threonine(out) + Na(+)(out) = L-glutamyl-L-arginyl-glycyl-L-methionyl-L-threonine(in) + Na(+)(in)</text>
        <dbReference type="Rhea" id="RHEA:72111"/>
        <dbReference type="ChEBI" id="CHEBI:29101"/>
        <dbReference type="ChEBI" id="CHEBI:191852"/>
    </reaction>
</comment>
<comment type="catalytic activity">
    <reaction evidence="1">
        <text>N,N-dimethylglycine(out) + Na(+)(out) = N,N-dimethylglycine(in) + Na(+)(in)</text>
        <dbReference type="Rhea" id="RHEA:76591"/>
        <dbReference type="ChEBI" id="CHEBI:29101"/>
        <dbReference type="ChEBI" id="CHEBI:58251"/>
    </reaction>
</comment>
<comment type="activity regulation">
    <text evidence="1">Inhibited by emetine, quinidine and verapamil. The IC(50) of emetine is 4.2 uM. Not inhibited by valproic acid. Transport of (R)-carnitine is stimulated by cholesterol in the plasma membrane.</text>
</comment>
<comment type="biophysicochemical properties">
    <kinetics>
        <KM evidence="5">63 uM for tetraethylammonium (at pH 7.5)</KM>
        <KM evidence="5">14.8 uM for carnitine (at pH 7.5 adn 140 mM NaCl)</KM>
    </kinetics>
</comment>
<comment type="subunit">
    <text evidence="2">Interacts with PDZK1.</text>
</comment>
<comment type="subcellular location">
    <subcellularLocation>
        <location evidence="1">Cell membrane</location>
        <topology evidence="1">Multi-pass membrane protein</topology>
    </subcellularLocation>
    <subcellularLocation>
        <location evidence="1">Apical cell membrane</location>
        <topology evidence="3">Multi-pass membrane protein</topology>
    </subcellularLocation>
    <subcellularLocation>
        <location evidence="1">Basal cell membrane</location>
        <topology evidence="3">Multi-pass membrane protein</topology>
    </subcellularLocation>
</comment>
<comment type="tissue specificity">
    <text evidence="5 6">Expressed in the proximal and distal tubules and in the glomeruli in the kidney, in the myocardium, valves, and arterioles in the heart, in the labyrinthine layer of the placenta, and in the cortex, hippocampus, and cerebellum in the brain. Expressed in Sertoli cells in testis (PubMed:17616214).</text>
</comment>
<comment type="similarity">
    <text evidence="7">Belongs to the major facilitator (TC 2.A.1) superfamily. Organic cation transporter (TC 2.A.1.19) family.</text>
</comment>
<accession>O70594</accession>
<accession>Q9QWL0</accession>
<gene>
    <name type="primary">Slc22a5</name>
    <name type="synonym">Octn2</name>
</gene>
<protein>
    <recommendedName>
        <fullName>Organic cation/carnitine transporter 2</fullName>
    </recommendedName>
    <alternativeName>
        <fullName>CT1</fullName>
    </alternativeName>
    <alternativeName>
        <fullName>High-affinity sodium-dependent carnitine cotransporter</fullName>
    </alternativeName>
    <alternativeName>
        <fullName>Solute carrier family 22 member 5</fullName>
    </alternativeName>
    <alternativeName>
        <fullName>UST2r</fullName>
    </alternativeName>
</protein>
<dbReference type="EMBL" id="AJ001933">
    <property type="protein sequence ID" value="CAA05106.1"/>
    <property type="molecule type" value="mRNA"/>
</dbReference>
<dbReference type="EMBL" id="AB017260">
    <property type="protein sequence ID" value="BAA34399.1"/>
    <property type="molecule type" value="mRNA"/>
</dbReference>
<dbReference type="EMBL" id="AF110416">
    <property type="protein sequence ID" value="AAD54059.1"/>
    <property type="molecule type" value="mRNA"/>
</dbReference>
<dbReference type="PIR" id="JE0346">
    <property type="entry name" value="JE0346"/>
</dbReference>
<dbReference type="RefSeq" id="NP_062142.1">
    <property type="nucleotide sequence ID" value="NM_019269.2"/>
</dbReference>
<dbReference type="SMR" id="O70594"/>
<dbReference type="FunCoup" id="O70594">
    <property type="interactions" value="126"/>
</dbReference>
<dbReference type="IntAct" id="O70594">
    <property type="interactions" value="4"/>
</dbReference>
<dbReference type="STRING" id="10116.ENSRNOP00000069462"/>
<dbReference type="BindingDB" id="O70594"/>
<dbReference type="ChEMBL" id="CHEMBL1075238"/>
<dbReference type="GlyCosmos" id="O70594">
    <property type="glycosylation" value="3 sites, No reported glycans"/>
</dbReference>
<dbReference type="GlyGen" id="O70594">
    <property type="glycosylation" value="3 sites"/>
</dbReference>
<dbReference type="iPTMnet" id="O70594"/>
<dbReference type="PhosphoSitePlus" id="O70594"/>
<dbReference type="PaxDb" id="10116-ENSRNOP00000011340"/>
<dbReference type="Ensembl" id="ENSRNOT00000011340.5">
    <property type="protein sequence ID" value="ENSRNOP00000011340.4"/>
    <property type="gene ID" value="ENSRNOG00000008432.8"/>
</dbReference>
<dbReference type="GeneID" id="29726"/>
<dbReference type="KEGG" id="rno:29726"/>
<dbReference type="UCSC" id="RGD:3702">
    <property type="organism name" value="rat"/>
</dbReference>
<dbReference type="AGR" id="RGD:3702"/>
<dbReference type="CTD" id="6584"/>
<dbReference type="RGD" id="3702">
    <property type="gene designation" value="Slc22a5"/>
</dbReference>
<dbReference type="eggNOG" id="KOG0255">
    <property type="taxonomic scope" value="Eukaryota"/>
</dbReference>
<dbReference type="GeneTree" id="ENSGT00940000154155"/>
<dbReference type="InParanoid" id="O70594"/>
<dbReference type="OMA" id="RIIYCTL"/>
<dbReference type="OrthoDB" id="3936150at2759"/>
<dbReference type="PhylomeDB" id="O70594"/>
<dbReference type="TreeFam" id="TF315847"/>
<dbReference type="Reactome" id="R-RNO-200425">
    <property type="pathway name" value="Carnitine shuttle"/>
</dbReference>
<dbReference type="Reactome" id="R-RNO-549127">
    <property type="pathway name" value="Organic cation transport"/>
</dbReference>
<dbReference type="PRO" id="PR:O70594"/>
<dbReference type="Proteomes" id="UP000002494">
    <property type="component" value="Chromosome 10"/>
</dbReference>
<dbReference type="Bgee" id="ENSRNOG00000008432">
    <property type="expression patterns" value="Expressed in adult mammalian kidney and 18 other cell types or tissues"/>
</dbReference>
<dbReference type="ExpressionAtlas" id="O70594">
    <property type="expression patterns" value="baseline and differential"/>
</dbReference>
<dbReference type="GO" id="GO:0016324">
    <property type="term" value="C:apical plasma membrane"/>
    <property type="evidence" value="ECO:0000266"/>
    <property type="project" value="RGD"/>
</dbReference>
<dbReference type="GO" id="GO:0009925">
    <property type="term" value="C:basal plasma membrane"/>
    <property type="evidence" value="ECO:0000266"/>
    <property type="project" value="RGD"/>
</dbReference>
<dbReference type="GO" id="GO:0016323">
    <property type="term" value="C:basolateral plasma membrane"/>
    <property type="evidence" value="ECO:0000314"/>
    <property type="project" value="RGD"/>
</dbReference>
<dbReference type="GO" id="GO:0031526">
    <property type="term" value="C:brush border membrane"/>
    <property type="evidence" value="ECO:0000266"/>
    <property type="project" value="RGD"/>
</dbReference>
<dbReference type="GO" id="GO:0005737">
    <property type="term" value="C:cytoplasm"/>
    <property type="evidence" value="ECO:0000314"/>
    <property type="project" value="ARUK-UCL"/>
</dbReference>
<dbReference type="GO" id="GO:0005829">
    <property type="term" value="C:cytosol"/>
    <property type="evidence" value="ECO:0000314"/>
    <property type="project" value="ARUK-UCL"/>
</dbReference>
<dbReference type="GO" id="GO:0005886">
    <property type="term" value="C:plasma membrane"/>
    <property type="evidence" value="ECO:0000314"/>
    <property type="project" value="ARUK-UCL"/>
</dbReference>
<dbReference type="GO" id="GO:1901235">
    <property type="term" value="F:(R)-carnitine transmembrane transporter activity"/>
    <property type="evidence" value="ECO:0000315"/>
    <property type="project" value="ARUK-UCL"/>
</dbReference>
<dbReference type="GO" id="GO:0015199">
    <property type="term" value="F:amino-acid betaine transmembrane transporter activity"/>
    <property type="evidence" value="ECO:0000250"/>
    <property type="project" value="UniProtKB"/>
</dbReference>
<dbReference type="GO" id="GO:0005524">
    <property type="term" value="F:ATP binding"/>
    <property type="evidence" value="ECO:0007669"/>
    <property type="project" value="UniProtKB-KW"/>
</dbReference>
<dbReference type="GO" id="GO:0015226">
    <property type="term" value="F:carnitine transmembrane transporter activity"/>
    <property type="evidence" value="ECO:0000314"/>
    <property type="project" value="UniProtKB"/>
</dbReference>
<dbReference type="GO" id="GO:0030165">
    <property type="term" value="F:PDZ domain binding"/>
    <property type="evidence" value="ECO:0000266"/>
    <property type="project" value="RGD"/>
</dbReference>
<dbReference type="GO" id="GO:0015651">
    <property type="term" value="F:quaternary ammonium group transmembrane transporter activity"/>
    <property type="evidence" value="ECO:0000314"/>
    <property type="project" value="RGD"/>
</dbReference>
<dbReference type="GO" id="GO:0015081">
    <property type="term" value="F:sodium ion transmembrane transporter activity"/>
    <property type="evidence" value="ECO:0007669"/>
    <property type="project" value="Ensembl"/>
</dbReference>
<dbReference type="GO" id="GO:0015293">
    <property type="term" value="F:symporter activity"/>
    <property type="evidence" value="ECO:0007669"/>
    <property type="project" value="UniProtKB-KW"/>
</dbReference>
<dbReference type="GO" id="GO:1902270">
    <property type="term" value="P:(R)-carnitine transmembrane transport"/>
    <property type="evidence" value="ECO:0000314"/>
    <property type="project" value="UniProtKB"/>
</dbReference>
<dbReference type="GO" id="GO:1900749">
    <property type="term" value="P:(R)-carnitine transport"/>
    <property type="evidence" value="ECO:0000266"/>
    <property type="project" value="RGD"/>
</dbReference>
<dbReference type="GO" id="GO:0007512">
    <property type="term" value="P:adult heart development"/>
    <property type="evidence" value="ECO:0000266"/>
    <property type="project" value="RGD"/>
</dbReference>
<dbReference type="GO" id="GO:0009437">
    <property type="term" value="P:carnitine metabolic process"/>
    <property type="evidence" value="ECO:0000266"/>
    <property type="project" value="RGD"/>
</dbReference>
<dbReference type="GO" id="GO:1902603">
    <property type="term" value="P:carnitine transmembrane transport"/>
    <property type="evidence" value="ECO:0000315"/>
    <property type="project" value="RGD"/>
</dbReference>
<dbReference type="GO" id="GO:0015879">
    <property type="term" value="P:carnitine transport"/>
    <property type="evidence" value="ECO:0000314"/>
    <property type="project" value="RGD"/>
</dbReference>
<dbReference type="GO" id="GO:0051649">
    <property type="term" value="P:establishment of localization in cell"/>
    <property type="evidence" value="ECO:0000266"/>
    <property type="project" value="RGD"/>
</dbReference>
<dbReference type="GO" id="GO:0097421">
    <property type="term" value="P:liver regeneration"/>
    <property type="evidence" value="ECO:0000270"/>
    <property type="project" value="RGD"/>
</dbReference>
<dbReference type="GO" id="GO:0007626">
    <property type="term" value="P:locomotory behavior"/>
    <property type="evidence" value="ECO:0000266"/>
    <property type="project" value="RGD"/>
</dbReference>
<dbReference type="GO" id="GO:0007005">
    <property type="term" value="P:mitochondrion organization"/>
    <property type="evidence" value="ECO:0000266"/>
    <property type="project" value="RGD"/>
</dbReference>
<dbReference type="GO" id="GO:0060731">
    <property type="term" value="P:positive regulation of intestinal epithelial structure maintenance"/>
    <property type="evidence" value="ECO:0000266"/>
    <property type="project" value="RGD"/>
</dbReference>
<dbReference type="GO" id="GO:0015697">
    <property type="term" value="P:quaternary ammonium group transport"/>
    <property type="evidence" value="ECO:0000314"/>
    <property type="project" value="RGD"/>
</dbReference>
<dbReference type="GO" id="GO:0048608">
    <property type="term" value="P:reproductive structure development"/>
    <property type="evidence" value="ECO:0000266"/>
    <property type="project" value="RGD"/>
</dbReference>
<dbReference type="GO" id="GO:0034612">
    <property type="term" value="P:response to tumor necrosis factor"/>
    <property type="evidence" value="ECO:0000250"/>
    <property type="project" value="UniProtKB"/>
</dbReference>
<dbReference type="GO" id="GO:0034341">
    <property type="term" value="P:response to type II interferon"/>
    <property type="evidence" value="ECO:0000250"/>
    <property type="project" value="UniProtKB"/>
</dbReference>
<dbReference type="GO" id="GO:0070715">
    <property type="term" value="P:sodium-dependent organic cation transport"/>
    <property type="evidence" value="ECO:0000266"/>
    <property type="project" value="RGD"/>
</dbReference>
<dbReference type="GO" id="GO:0150104">
    <property type="term" value="P:transport across blood-brain barrier"/>
    <property type="evidence" value="ECO:0000266"/>
    <property type="project" value="RGD"/>
</dbReference>
<dbReference type="CDD" id="cd17376">
    <property type="entry name" value="MFS_SLC22A4_5_OCTN1_2"/>
    <property type="match status" value="1"/>
</dbReference>
<dbReference type="FunFam" id="1.20.1250.20:FF:000070">
    <property type="entry name" value="Solute carrier family 22 member 5"/>
    <property type="match status" value="1"/>
</dbReference>
<dbReference type="Gene3D" id="1.20.1250.20">
    <property type="entry name" value="MFS general substrate transporter like domains"/>
    <property type="match status" value="1"/>
</dbReference>
<dbReference type="InterPro" id="IPR020846">
    <property type="entry name" value="MFS_dom"/>
</dbReference>
<dbReference type="InterPro" id="IPR005828">
    <property type="entry name" value="MFS_sugar_transport-like"/>
</dbReference>
<dbReference type="InterPro" id="IPR036259">
    <property type="entry name" value="MFS_trans_sf"/>
</dbReference>
<dbReference type="InterPro" id="IPR004749">
    <property type="entry name" value="Orgcat_transp/SVOP"/>
</dbReference>
<dbReference type="InterPro" id="IPR045915">
    <property type="entry name" value="S22A4/5"/>
</dbReference>
<dbReference type="InterPro" id="IPR005829">
    <property type="entry name" value="Sugar_transporter_CS"/>
</dbReference>
<dbReference type="NCBIfam" id="TIGR00898">
    <property type="entry name" value="2A0119"/>
    <property type="match status" value="1"/>
</dbReference>
<dbReference type="PANTHER" id="PTHR24064">
    <property type="entry name" value="SOLUTE CARRIER FAMILY 22 MEMBER"/>
    <property type="match status" value="1"/>
</dbReference>
<dbReference type="Pfam" id="PF00083">
    <property type="entry name" value="Sugar_tr"/>
    <property type="match status" value="1"/>
</dbReference>
<dbReference type="SUPFAM" id="SSF103473">
    <property type="entry name" value="MFS general substrate transporter"/>
    <property type="match status" value="1"/>
</dbReference>
<dbReference type="PROSITE" id="PS50850">
    <property type="entry name" value="MFS"/>
    <property type="match status" value="1"/>
</dbReference>
<dbReference type="PROSITE" id="PS00216">
    <property type="entry name" value="SUGAR_TRANSPORT_1"/>
    <property type="match status" value="1"/>
</dbReference>
<reference key="1">
    <citation type="journal article" date="1998" name="FEBS Lett.">
        <title>Molecular cloning and characterization of two novel transport proteins from rat kidney.</title>
        <authorList>
            <person name="Schoemig E."/>
            <person name="Spitzenberger F."/>
            <person name="Engelhardt M."/>
            <person name="Martel F."/>
            <person name="Oerding N."/>
            <person name="Gruendemann D."/>
        </authorList>
    </citation>
    <scope>NUCLEOTIDE SEQUENCE [MRNA]</scope>
    <source>
        <tissue>Kidney</tissue>
    </source>
</reference>
<reference key="2">
    <citation type="journal article" date="1998" name="Biochem. Biophys. Res. Commun.">
        <title>Molecular cloning and characterization of high-affinity carnitine transporter from rat intestine.</title>
        <authorList>
            <person name="Sekine T."/>
            <person name="Kusuhara H."/>
            <person name="Utsunomiya-Tate N."/>
            <person name="Tsuda M."/>
            <person name="Sugiyama Y."/>
            <person name="Kanai Y."/>
            <person name="Endou H."/>
        </authorList>
    </citation>
    <scope>NUCLEOTIDE SEQUENCE [MRNA]</scope>
    <source>
        <strain>Sprague-Dawley</strain>
        <tissue>Intestine</tissue>
    </source>
</reference>
<reference key="3">
    <citation type="journal article" date="1999" name="J. Pharmacol. Exp. Ther.">
        <title>Functional characteristics and tissue distribution pattern of organic cation transporter 2 (OCTN2), an organic cation/carnitine transporter.</title>
        <authorList>
            <person name="Wu X."/>
            <person name="Huang W."/>
            <person name="Prasad P.D."/>
            <person name="Seth P."/>
            <person name="Rajan D.P."/>
            <person name="Leibach F.H."/>
            <person name="Chen J."/>
            <person name="Conway S.J."/>
            <person name="Ganapathy V."/>
        </authorList>
    </citation>
    <scope>NUCLEOTIDE SEQUENCE [MRNA]</scope>
    <scope>FUNCTION</scope>
    <scope>TISSUE SPECIFICITY</scope>
    <scope>TRANSPORTER ACTIVITY</scope>
    <scope>BIOPHYSICOCHEMICAL PROPERTIES</scope>
</reference>
<reference key="4">
    <citation type="journal article" date="2007" name="Mol. Pharm.">
        <title>Transport of organic cations across the blood-testis barrier.</title>
        <authorList>
            <person name="Maeda T."/>
            <person name="Goto A."/>
            <person name="Kobayashi D."/>
            <person name="Tamai I."/>
        </authorList>
    </citation>
    <scope>FUNCTION</scope>
    <scope>TISSUE SPECIFICITY</scope>
</reference>
<reference key="5">
    <citation type="journal article" date="2012" name="Nat. Commun.">
        <title>Quantitative maps of protein phosphorylation sites across 14 different rat organs and tissues.</title>
        <authorList>
            <person name="Lundby A."/>
            <person name="Secher A."/>
            <person name="Lage K."/>
            <person name="Nordsborg N.B."/>
            <person name="Dmytriyev A."/>
            <person name="Lundby C."/>
            <person name="Olsen J.V."/>
        </authorList>
    </citation>
    <scope>PHOSPHORYLATION [LARGE SCALE ANALYSIS] AT SER-548</scope>
    <scope>IDENTIFICATION BY MASS SPECTROMETRY [LARGE SCALE ANALYSIS]</scope>
</reference>
<proteinExistence type="evidence at protein level"/>
<organism>
    <name type="scientific">Rattus norvegicus</name>
    <name type="common">Rat</name>
    <dbReference type="NCBI Taxonomy" id="10116"/>
    <lineage>
        <taxon>Eukaryota</taxon>
        <taxon>Metazoa</taxon>
        <taxon>Chordata</taxon>
        <taxon>Craniata</taxon>
        <taxon>Vertebrata</taxon>
        <taxon>Euteleostomi</taxon>
        <taxon>Mammalia</taxon>
        <taxon>Eutheria</taxon>
        <taxon>Euarchontoglires</taxon>
        <taxon>Glires</taxon>
        <taxon>Rodentia</taxon>
        <taxon>Myomorpha</taxon>
        <taxon>Muroidea</taxon>
        <taxon>Muridae</taxon>
        <taxon>Murinae</taxon>
        <taxon>Rattus</taxon>
    </lineage>
</organism>
<keyword id="KW-0067">ATP-binding</keyword>
<keyword id="KW-1003">Cell membrane</keyword>
<keyword id="KW-0325">Glycoprotein</keyword>
<keyword id="KW-0406">Ion transport</keyword>
<keyword id="KW-0472">Membrane</keyword>
<keyword id="KW-0547">Nucleotide-binding</keyword>
<keyword id="KW-0597">Phosphoprotein</keyword>
<keyword id="KW-1185">Reference proteome</keyword>
<keyword id="KW-0915">Sodium</keyword>
<keyword id="KW-0739">Sodium transport</keyword>
<keyword id="KW-0769">Symport</keyword>
<keyword id="KW-0812">Transmembrane</keyword>
<keyword id="KW-1133">Transmembrane helix</keyword>
<keyword id="KW-0813">Transport</keyword>
<sequence length="557" mass="62567">MRDYDEVTAFLGEWGPFQRLIFFLLSASIIPNGFNGMSIVFLAGTPEHRCLVPHTVNLSSAWRNHSIPLETKDGRQVPQSCRRYRLATIANFSALGLEPGRDVDLEQLEQENCLDGWEYNKDVFLSTIVTEWDLVCKDDWKAPLTTSLFFVGVLMGSFISGQLSDRFGRKNVLFLTMGMQTGFSFLQLFSVNFEMFTVLFVLVGMGQISNYVAAFVLGTEILSKSIRIIFATLGVCIFYAFGFMVLPLFAYFIRDWRMLLLALTVPGVLCGALWWFIPESPRWLISQGRVKEAEVIIRKAAKFNGIVAPSTIFDPSELQDLNSKKPQSHHIYDLVRTRNIRIITIMSIILWLTISVGYFGLSLDTPNLHGDIYVNCFLLAAVEVPAYVLAWLLLQHLPRRYSISAALFLGGSVLLFIQLVPSELFYLSTALVMVGKFGITSAYSMVYVYTAELYPTVVRNMGVGVSSTASRLGSILSPYFVYLGAYDRFLPYILMGSLTILTAILTLFFPESFGAPLPDTIDQMLRVKGIKQWQIQSQTRTQKDGGESPTVLKSTAF</sequence>
<feature type="chain" id="PRO_0000220502" description="Organic cation/carnitine transporter 2">
    <location>
        <begin position="1"/>
        <end position="557"/>
    </location>
</feature>
<feature type="topological domain" description="Cytoplasmic" evidence="3">
    <location>
        <begin position="1"/>
        <end position="20"/>
    </location>
</feature>
<feature type="transmembrane region" description="Helical; Name=1" evidence="3">
    <location>
        <begin position="21"/>
        <end position="41"/>
    </location>
</feature>
<feature type="topological domain" description="Extracellular" evidence="3">
    <location>
        <begin position="42"/>
        <end position="142"/>
    </location>
</feature>
<feature type="transmembrane region" description="Helical; Name=2" evidence="3">
    <location>
        <begin position="143"/>
        <end position="163"/>
    </location>
</feature>
<feature type="topological domain" description="Cytoplasmic" evidence="3">
    <location>
        <begin position="164"/>
        <end position="172"/>
    </location>
</feature>
<feature type="transmembrane region" description="Helical; Name=3" evidence="3">
    <location>
        <begin position="173"/>
        <end position="193"/>
    </location>
</feature>
<feature type="topological domain" description="Extracellular" evidence="3">
    <location>
        <begin position="194"/>
        <end position="197"/>
    </location>
</feature>
<feature type="transmembrane region" description="Helical; Name=4" evidence="3">
    <location>
        <begin position="198"/>
        <end position="218"/>
    </location>
</feature>
<feature type="topological domain" description="Cytoplasmic" evidence="3">
    <location>
        <begin position="219"/>
        <end position="232"/>
    </location>
</feature>
<feature type="transmembrane region" description="Helical; Name=5" evidence="3">
    <location>
        <begin position="233"/>
        <end position="253"/>
    </location>
</feature>
<feature type="topological domain" description="Extracellular" evidence="3">
    <location>
        <begin position="254"/>
        <end position="257"/>
    </location>
</feature>
<feature type="transmembrane region" description="Helical; Name=6" evidence="3">
    <location>
        <begin position="258"/>
        <end position="278"/>
    </location>
</feature>
<feature type="topological domain" description="Cytoplasmic" evidence="3">
    <location>
        <begin position="279"/>
        <end position="341"/>
    </location>
</feature>
<feature type="transmembrane region" description="Helical; Name=7" evidence="3">
    <location>
        <begin position="342"/>
        <end position="362"/>
    </location>
</feature>
<feature type="topological domain" description="Extracellular" evidence="3">
    <location>
        <begin position="363"/>
        <end position="373"/>
    </location>
</feature>
<feature type="transmembrane region" description="Helical; Name=8" evidence="3">
    <location>
        <begin position="374"/>
        <end position="394"/>
    </location>
</feature>
<feature type="topological domain" description="Cytoplasmic" evidence="3">
    <location>
        <begin position="395"/>
        <end position="406"/>
    </location>
</feature>
<feature type="transmembrane region" description="Helical; Name=9" evidence="3">
    <location>
        <begin position="407"/>
        <end position="427"/>
    </location>
</feature>
<feature type="topological domain" description="Extracellular" evidence="3">
    <location>
        <begin position="428"/>
        <end position="430"/>
    </location>
</feature>
<feature type="transmembrane region" description="Helical; Name=10" evidence="3">
    <location>
        <begin position="431"/>
        <end position="451"/>
    </location>
</feature>
<feature type="topological domain" description="Cytoplasmic" evidence="3">
    <location>
        <begin position="452"/>
        <end position="462"/>
    </location>
</feature>
<feature type="transmembrane region" description="Helical; Name=11" evidence="3">
    <location>
        <begin position="463"/>
        <end position="483"/>
    </location>
</feature>
<feature type="topological domain" description="Extracellular" evidence="3">
    <location>
        <begin position="484"/>
        <end position="488"/>
    </location>
</feature>
<feature type="transmembrane region" description="Helical; Name=12" evidence="3">
    <location>
        <begin position="489"/>
        <end position="509"/>
    </location>
</feature>
<feature type="topological domain" description="Cytoplasmic" evidence="3">
    <location>
        <begin position="510"/>
        <end position="557"/>
    </location>
</feature>
<feature type="region of interest" description="Disordered" evidence="4">
    <location>
        <begin position="537"/>
        <end position="557"/>
    </location>
</feature>
<feature type="binding site" evidence="3">
    <location>
        <begin position="218"/>
        <end position="225"/>
    </location>
    <ligand>
        <name>ATP</name>
        <dbReference type="ChEBI" id="CHEBI:30616"/>
    </ligand>
</feature>
<feature type="modified residue" description="Phosphotyrosine" evidence="1">
    <location>
        <position position="486"/>
    </location>
</feature>
<feature type="modified residue" description="Phosphoserine" evidence="9">
    <location>
        <position position="548"/>
    </location>
</feature>
<feature type="modified residue" description="Phosphothreonine" evidence="1">
    <location>
        <position position="550"/>
    </location>
</feature>
<feature type="glycosylation site" description="N-linked (GlcNAc...) asparagine" evidence="3">
    <location>
        <position position="57"/>
    </location>
</feature>
<feature type="glycosylation site" description="N-linked (GlcNAc...) asparagine" evidence="3">
    <location>
        <position position="64"/>
    </location>
</feature>
<feature type="glycosylation site" description="N-linked (GlcNAc...) asparagine" evidence="3">
    <location>
        <position position="91"/>
    </location>
</feature>
<feature type="sequence conflict" description="In Ref. 2; BAA34399." evidence="7" ref="2">
    <original>W</original>
    <variation>G</variation>
    <location>
        <position position="275"/>
    </location>
</feature>